<proteinExistence type="inferred from homology"/>
<name>NTPPA_BORPA</name>
<feature type="chain" id="PRO_0000122995" description="dTTP/UTP pyrophosphatase">
    <location>
        <begin position="1"/>
        <end position="207"/>
    </location>
</feature>
<feature type="active site" description="Proton acceptor" evidence="1">
    <location>
        <position position="87"/>
    </location>
</feature>
<feature type="site" description="Important for substrate specificity" evidence="1">
    <location>
        <position position="21"/>
    </location>
</feature>
<feature type="site" description="Important for substrate specificity" evidence="1">
    <location>
        <position position="88"/>
    </location>
</feature>
<feature type="site" description="Important for substrate specificity" evidence="1">
    <location>
        <position position="170"/>
    </location>
</feature>
<comment type="function">
    <text evidence="1">Nucleoside triphosphate pyrophosphatase that hydrolyzes dTTP and UTP. May have a dual role in cell division arrest and in preventing the incorporation of modified nucleotides into cellular nucleic acids.</text>
</comment>
<comment type="catalytic activity">
    <reaction evidence="1">
        <text>dTTP + H2O = dTMP + diphosphate + H(+)</text>
        <dbReference type="Rhea" id="RHEA:28534"/>
        <dbReference type="ChEBI" id="CHEBI:15377"/>
        <dbReference type="ChEBI" id="CHEBI:15378"/>
        <dbReference type="ChEBI" id="CHEBI:33019"/>
        <dbReference type="ChEBI" id="CHEBI:37568"/>
        <dbReference type="ChEBI" id="CHEBI:63528"/>
        <dbReference type="EC" id="3.6.1.9"/>
    </reaction>
</comment>
<comment type="catalytic activity">
    <reaction evidence="1">
        <text>UTP + H2O = UMP + diphosphate + H(+)</text>
        <dbReference type="Rhea" id="RHEA:29395"/>
        <dbReference type="ChEBI" id="CHEBI:15377"/>
        <dbReference type="ChEBI" id="CHEBI:15378"/>
        <dbReference type="ChEBI" id="CHEBI:33019"/>
        <dbReference type="ChEBI" id="CHEBI:46398"/>
        <dbReference type="ChEBI" id="CHEBI:57865"/>
        <dbReference type="EC" id="3.6.1.9"/>
    </reaction>
</comment>
<comment type="cofactor">
    <cofactor evidence="1">
        <name>a divalent metal cation</name>
        <dbReference type="ChEBI" id="CHEBI:60240"/>
    </cofactor>
</comment>
<comment type="subcellular location">
    <subcellularLocation>
        <location evidence="1">Cytoplasm</location>
    </subcellularLocation>
</comment>
<comment type="similarity">
    <text evidence="1">Belongs to the Maf family. YhdE subfamily.</text>
</comment>
<reference key="1">
    <citation type="journal article" date="2003" name="Nat. Genet.">
        <title>Comparative analysis of the genome sequences of Bordetella pertussis, Bordetella parapertussis and Bordetella bronchiseptica.</title>
        <authorList>
            <person name="Parkhill J."/>
            <person name="Sebaihia M."/>
            <person name="Preston A."/>
            <person name="Murphy L.D."/>
            <person name="Thomson N.R."/>
            <person name="Harris D.E."/>
            <person name="Holden M.T.G."/>
            <person name="Churcher C.M."/>
            <person name="Bentley S.D."/>
            <person name="Mungall K.L."/>
            <person name="Cerdeno-Tarraga A.-M."/>
            <person name="Temple L."/>
            <person name="James K.D."/>
            <person name="Harris B."/>
            <person name="Quail M.A."/>
            <person name="Achtman M."/>
            <person name="Atkin R."/>
            <person name="Baker S."/>
            <person name="Basham D."/>
            <person name="Bason N."/>
            <person name="Cherevach I."/>
            <person name="Chillingworth T."/>
            <person name="Collins M."/>
            <person name="Cronin A."/>
            <person name="Davis P."/>
            <person name="Doggett J."/>
            <person name="Feltwell T."/>
            <person name="Goble A."/>
            <person name="Hamlin N."/>
            <person name="Hauser H."/>
            <person name="Holroyd S."/>
            <person name="Jagels K."/>
            <person name="Leather S."/>
            <person name="Moule S."/>
            <person name="Norberczak H."/>
            <person name="O'Neil S."/>
            <person name="Ormond D."/>
            <person name="Price C."/>
            <person name="Rabbinowitsch E."/>
            <person name="Rutter S."/>
            <person name="Sanders M."/>
            <person name="Saunders D."/>
            <person name="Seeger K."/>
            <person name="Sharp S."/>
            <person name="Simmonds M."/>
            <person name="Skelton J."/>
            <person name="Squares R."/>
            <person name="Squares S."/>
            <person name="Stevens K."/>
            <person name="Unwin L."/>
            <person name="Whitehead S."/>
            <person name="Barrell B.G."/>
            <person name="Maskell D.J."/>
        </authorList>
    </citation>
    <scope>NUCLEOTIDE SEQUENCE [LARGE SCALE GENOMIC DNA]</scope>
    <source>
        <strain>12822 / ATCC BAA-587 / NCTC 13253</strain>
    </source>
</reference>
<evidence type="ECO:0000255" key="1">
    <source>
        <dbReference type="HAMAP-Rule" id="MF_00528"/>
    </source>
</evidence>
<organism>
    <name type="scientific">Bordetella parapertussis (strain 12822 / ATCC BAA-587 / NCTC 13253)</name>
    <dbReference type="NCBI Taxonomy" id="257311"/>
    <lineage>
        <taxon>Bacteria</taxon>
        <taxon>Pseudomonadati</taxon>
        <taxon>Pseudomonadota</taxon>
        <taxon>Betaproteobacteria</taxon>
        <taxon>Burkholderiales</taxon>
        <taxon>Alcaligenaceae</taxon>
        <taxon>Bordetella</taxon>
    </lineage>
</organism>
<protein>
    <recommendedName>
        <fullName evidence="1">dTTP/UTP pyrophosphatase</fullName>
        <shortName evidence="1">dTTPase/UTPase</shortName>
        <ecNumber evidence="1">3.6.1.9</ecNumber>
    </recommendedName>
    <alternativeName>
        <fullName evidence="1">Nucleoside triphosphate pyrophosphatase</fullName>
    </alternativeName>
    <alternativeName>
        <fullName evidence="1">Nucleotide pyrophosphatase</fullName>
        <shortName evidence="1">Nucleotide PPase</shortName>
    </alternativeName>
</protein>
<gene>
    <name type="ordered locus">BPP2416</name>
</gene>
<keyword id="KW-0963">Cytoplasm</keyword>
<keyword id="KW-0378">Hydrolase</keyword>
<keyword id="KW-0546">Nucleotide metabolism</keyword>
<accession>Q7W7U4</accession>
<sequence length="207" mass="22218">MSDATLAADPPRLYLASASPRRRELLLQIGLTHTVLRVPAPPGEDEPQHPGEAACDYVRRTARDKAERGQAWLHSQQLPDLPLLAADTTVIVDGIVLGKPADRADALRMLAALSGREHEVHTAVALCHQGRLREDVSITRVRMRALEQAELQRYCDSGEPYGKAGAYGIQGLAGAFVSHIAGSYTGVMGLPLYETAALLRSAGIAVP</sequence>
<dbReference type="EC" id="3.6.1.9" evidence="1"/>
<dbReference type="EMBL" id="BX640430">
    <property type="protein sequence ID" value="CAE37712.1"/>
    <property type="molecule type" value="Genomic_DNA"/>
</dbReference>
<dbReference type="RefSeq" id="WP_003813200.1">
    <property type="nucleotide sequence ID" value="NC_002928.3"/>
</dbReference>
<dbReference type="SMR" id="Q7W7U4"/>
<dbReference type="GeneID" id="93204201"/>
<dbReference type="KEGG" id="bpa:BPP2416"/>
<dbReference type="HOGENOM" id="CLU_040416_2_1_4"/>
<dbReference type="Proteomes" id="UP000001421">
    <property type="component" value="Chromosome"/>
</dbReference>
<dbReference type="GO" id="GO:0005737">
    <property type="term" value="C:cytoplasm"/>
    <property type="evidence" value="ECO:0007669"/>
    <property type="project" value="UniProtKB-SubCell"/>
</dbReference>
<dbReference type="GO" id="GO:0036218">
    <property type="term" value="F:dTTP diphosphatase activity"/>
    <property type="evidence" value="ECO:0007669"/>
    <property type="project" value="RHEA"/>
</dbReference>
<dbReference type="GO" id="GO:0036221">
    <property type="term" value="F:UTP diphosphatase activity"/>
    <property type="evidence" value="ECO:0007669"/>
    <property type="project" value="RHEA"/>
</dbReference>
<dbReference type="GO" id="GO:0009117">
    <property type="term" value="P:nucleotide metabolic process"/>
    <property type="evidence" value="ECO:0007669"/>
    <property type="project" value="UniProtKB-KW"/>
</dbReference>
<dbReference type="CDD" id="cd00555">
    <property type="entry name" value="Maf"/>
    <property type="match status" value="1"/>
</dbReference>
<dbReference type="Gene3D" id="3.90.950.10">
    <property type="match status" value="1"/>
</dbReference>
<dbReference type="HAMAP" id="MF_00528">
    <property type="entry name" value="Maf"/>
    <property type="match status" value="1"/>
</dbReference>
<dbReference type="InterPro" id="IPR029001">
    <property type="entry name" value="ITPase-like_fam"/>
</dbReference>
<dbReference type="InterPro" id="IPR003697">
    <property type="entry name" value="Maf-like"/>
</dbReference>
<dbReference type="NCBIfam" id="TIGR00172">
    <property type="entry name" value="maf"/>
    <property type="match status" value="1"/>
</dbReference>
<dbReference type="PANTHER" id="PTHR43213">
    <property type="entry name" value="BIFUNCTIONAL DTTP/UTP PYROPHOSPHATASE/METHYLTRANSFERASE PROTEIN-RELATED"/>
    <property type="match status" value="1"/>
</dbReference>
<dbReference type="PANTHER" id="PTHR43213:SF5">
    <property type="entry name" value="BIFUNCTIONAL DTTP_UTP PYROPHOSPHATASE_METHYLTRANSFERASE PROTEIN-RELATED"/>
    <property type="match status" value="1"/>
</dbReference>
<dbReference type="Pfam" id="PF02545">
    <property type="entry name" value="Maf"/>
    <property type="match status" value="1"/>
</dbReference>
<dbReference type="PIRSF" id="PIRSF006305">
    <property type="entry name" value="Maf"/>
    <property type="match status" value="1"/>
</dbReference>
<dbReference type="SUPFAM" id="SSF52972">
    <property type="entry name" value="ITPase-like"/>
    <property type="match status" value="1"/>
</dbReference>